<name>MPR_BACSU</name>
<accession>P39790</accession>
<reference key="1">
    <citation type="journal article" date="1990" name="J. Bacteriol.">
        <title>Gene encoding a novel extracellular metalloprotease in Bacillus subtilis.</title>
        <authorList>
            <person name="Sloma A."/>
            <person name="Rudolph C.F."/>
            <person name="Rufo G.A. Jr."/>
            <person name="Sullivan B.J."/>
            <person name="Theriault K.A."/>
            <person name="Ally D."/>
            <person name="Pero J."/>
        </authorList>
    </citation>
    <scope>NUCLEOTIDE SEQUENCE [GENOMIC DNA]</scope>
    <scope>PARTIAL PROTEIN SEQUENCE</scope>
    <source>
        <strain>GP241</strain>
    </source>
</reference>
<reference key="2">
    <citation type="submission" date="1997-07" db="EMBL/GenBank/DDBJ databases">
        <title>Sequence analysis of the 70kb region between 17 and 23 degree of the Bacillus subtilis chromosome.</title>
        <authorList>
            <person name="Haga K."/>
            <person name="Liu H."/>
            <person name="Yasumoto K."/>
            <person name="Takahashi H."/>
            <person name="Yoshikawa H."/>
        </authorList>
    </citation>
    <scope>NUCLEOTIDE SEQUENCE [GENOMIC DNA]</scope>
    <source>
        <strain>168</strain>
    </source>
</reference>
<reference key="3">
    <citation type="journal article" date="1997" name="Nature">
        <title>The complete genome sequence of the Gram-positive bacterium Bacillus subtilis.</title>
        <authorList>
            <person name="Kunst F."/>
            <person name="Ogasawara N."/>
            <person name="Moszer I."/>
            <person name="Albertini A.M."/>
            <person name="Alloni G."/>
            <person name="Azevedo V."/>
            <person name="Bertero M.G."/>
            <person name="Bessieres P."/>
            <person name="Bolotin A."/>
            <person name="Borchert S."/>
            <person name="Borriss R."/>
            <person name="Boursier L."/>
            <person name="Brans A."/>
            <person name="Braun M."/>
            <person name="Brignell S.C."/>
            <person name="Bron S."/>
            <person name="Brouillet S."/>
            <person name="Bruschi C.V."/>
            <person name="Caldwell B."/>
            <person name="Capuano V."/>
            <person name="Carter N.M."/>
            <person name="Choi S.-K."/>
            <person name="Codani J.-J."/>
            <person name="Connerton I.F."/>
            <person name="Cummings N.J."/>
            <person name="Daniel R.A."/>
            <person name="Denizot F."/>
            <person name="Devine K.M."/>
            <person name="Duesterhoeft A."/>
            <person name="Ehrlich S.D."/>
            <person name="Emmerson P.T."/>
            <person name="Entian K.-D."/>
            <person name="Errington J."/>
            <person name="Fabret C."/>
            <person name="Ferrari E."/>
            <person name="Foulger D."/>
            <person name="Fritz C."/>
            <person name="Fujita M."/>
            <person name="Fujita Y."/>
            <person name="Fuma S."/>
            <person name="Galizzi A."/>
            <person name="Galleron N."/>
            <person name="Ghim S.-Y."/>
            <person name="Glaser P."/>
            <person name="Goffeau A."/>
            <person name="Golightly E.J."/>
            <person name="Grandi G."/>
            <person name="Guiseppi G."/>
            <person name="Guy B.J."/>
            <person name="Haga K."/>
            <person name="Haiech J."/>
            <person name="Harwood C.R."/>
            <person name="Henaut A."/>
            <person name="Hilbert H."/>
            <person name="Holsappel S."/>
            <person name="Hosono S."/>
            <person name="Hullo M.-F."/>
            <person name="Itaya M."/>
            <person name="Jones L.-M."/>
            <person name="Joris B."/>
            <person name="Karamata D."/>
            <person name="Kasahara Y."/>
            <person name="Klaerr-Blanchard M."/>
            <person name="Klein C."/>
            <person name="Kobayashi Y."/>
            <person name="Koetter P."/>
            <person name="Koningstein G."/>
            <person name="Krogh S."/>
            <person name="Kumano M."/>
            <person name="Kurita K."/>
            <person name="Lapidus A."/>
            <person name="Lardinois S."/>
            <person name="Lauber J."/>
            <person name="Lazarevic V."/>
            <person name="Lee S.-M."/>
            <person name="Levine A."/>
            <person name="Liu H."/>
            <person name="Masuda S."/>
            <person name="Mauel C."/>
            <person name="Medigue C."/>
            <person name="Medina N."/>
            <person name="Mellado R.P."/>
            <person name="Mizuno M."/>
            <person name="Moestl D."/>
            <person name="Nakai S."/>
            <person name="Noback M."/>
            <person name="Noone D."/>
            <person name="O'Reilly M."/>
            <person name="Ogawa K."/>
            <person name="Ogiwara A."/>
            <person name="Oudega B."/>
            <person name="Park S.-H."/>
            <person name="Parro V."/>
            <person name="Pohl T.M."/>
            <person name="Portetelle D."/>
            <person name="Porwollik S."/>
            <person name="Prescott A.M."/>
            <person name="Presecan E."/>
            <person name="Pujic P."/>
            <person name="Purnelle B."/>
            <person name="Rapoport G."/>
            <person name="Rey M."/>
            <person name="Reynolds S."/>
            <person name="Rieger M."/>
            <person name="Rivolta C."/>
            <person name="Rocha E."/>
            <person name="Roche B."/>
            <person name="Rose M."/>
            <person name="Sadaie Y."/>
            <person name="Sato T."/>
            <person name="Scanlan E."/>
            <person name="Schleich S."/>
            <person name="Schroeter R."/>
            <person name="Scoffone F."/>
            <person name="Sekiguchi J."/>
            <person name="Sekowska A."/>
            <person name="Seror S.J."/>
            <person name="Serror P."/>
            <person name="Shin B.-S."/>
            <person name="Soldo B."/>
            <person name="Sorokin A."/>
            <person name="Tacconi E."/>
            <person name="Takagi T."/>
            <person name="Takahashi H."/>
            <person name="Takemaru K."/>
            <person name="Takeuchi M."/>
            <person name="Tamakoshi A."/>
            <person name="Tanaka T."/>
            <person name="Terpstra P."/>
            <person name="Tognoni A."/>
            <person name="Tosato V."/>
            <person name="Uchiyama S."/>
            <person name="Vandenbol M."/>
            <person name="Vannier F."/>
            <person name="Vassarotti A."/>
            <person name="Viari A."/>
            <person name="Wambutt R."/>
            <person name="Wedler E."/>
            <person name="Wedler H."/>
            <person name="Weitzenegger T."/>
            <person name="Winters P."/>
            <person name="Wipat A."/>
            <person name="Yamamoto H."/>
            <person name="Yamane K."/>
            <person name="Yasumoto K."/>
            <person name="Yata K."/>
            <person name="Yoshida K."/>
            <person name="Yoshikawa H.-F."/>
            <person name="Zumstein E."/>
            <person name="Yoshikawa H."/>
            <person name="Danchin A."/>
        </authorList>
    </citation>
    <scope>NUCLEOTIDE SEQUENCE [LARGE SCALE GENOMIC DNA]</scope>
    <source>
        <strain>168</strain>
    </source>
</reference>
<reference key="4">
    <citation type="journal article" date="1988" name="Gene">
        <title>Characterization of signal-sequence-coding regions selected from the Bacillus subtilis chromosome.</title>
        <authorList>
            <person name="Smith H."/>
            <person name="de Jong A."/>
            <person name="Bron S."/>
            <person name="Venema G."/>
        </authorList>
    </citation>
    <scope>NUCLEOTIDE SEQUENCE [GENOMIC DNA] OF 1-68</scope>
</reference>
<reference key="5">
    <citation type="journal article" date="1995" name="Microbiology">
        <title>Functional analysis of the Bacillus subtilis purT gene encoding formate-dependent glycinamide ribonucleotide transformylase.</title>
        <authorList>
            <person name="Saxild H.H."/>
            <person name="Jacobsen J.H."/>
            <person name="Nygaard P."/>
        </authorList>
    </citation>
    <scope>NUCLEOTIDE SEQUENCE [GENOMIC DNA] OF 1-10</scope>
    <source>
        <strain>168</strain>
    </source>
</reference>
<evidence type="ECO:0000250" key="1"/>
<evidence type="ECO:0000255" key="2"/>
<evidence type="ECO:0000255" key="3">
    <source>
        <dbReference type="PROSITE-ProRule" id="PRU10083"/>
    </source>
</evidence>
<evidence type="ECO:0000256" key="4">
    <source>
        <dbReference type="SAM" id="MobiDB-lite"/>
    </source>
</evidence>
<evidence type="ECO:0000305" key="5"/>
<organism>
    <name type="scientific">Bacillus subtilis (strain 168)</name>
    <dbReference type="NCBI Taxonomy" id="224308"/>
    <lineage>
        <taxon>Bacteria</taxon>
        <taxon>Bacillati</taxon>
        <taxon>Bacillota</taxon>
        <taxon>Bacilli</taxon>
        <taxon>Bacillales</taxon>
        <taxon>Bacillaceae</taxon>
        <taxon>Bacillus</taxon>
    </lineage>
</organism>
<proteinExistence type="evidence at protein level"/>
<dbReference type="EC" id="3.4.21.-"/>
<dbReference type="EMBL" id="L10505">
    <property type="protein sequence ID" value="AAA22604.1"/>
    <property type="molecule type" value="Genomic_DNA"/>
</dbReference>
<dbReference type="EMBL" id="AB006424">
    <property type="protein sequence ID" value="BAA33121.1"/>
    <property type="molecule type" value="Genomic_DNA"/>
</dbReference>
<dbReference type="EMBL" id="AL009126">
    <property type="protein sequence ID" value="CAB12018.1"/>
    <property type="molecule type" value="Genomic_DNA"/>
</dbReference>
<dbReference type="EMBL" id="M22916">
    <property type="protein sequence ID" value="AAA22832.1"/>
    <property type="molecule type" value="Genomic_DNA"/>
</dbReference>
<dbReference type="PIR" id="A35122">
    <property type="entry name" value="A35122"/>
</dbReference>
<dbReference type="RefSeq" id="NP_388106.1">
    <property type="nucleotide sequence ID" value="NC_000964.3"/>
</dbReference>
<dbReference type="RefSeq" id="WP_003246370.1">
    <property type="nucleotide sequence ID" value="NZ_OZ025638.1"/>
</dbReference>
<dbReference type="SMR" id="P39790"/>
<dbReference type="FunCoup" id="P39790">
    <property type="interactions" value="126"/>
</dbReference>
<dbReference type="STRING" id="224308.BSU02240"/>
<dbReference type="MEROPS" id="S01.272"/>
<dbReference type="PaxDb" id="224308-BSU02240"/>
<dbReference type="DNASU" id="938430"/>
<dbReference type="EnsemblBacteria" id="CAB12018">
    <property type="protein sequence ID" value="CAB12018"/>
    <property type="gene ID" value="BSU_02240"/>
</dbReference>
<dbReference type="GeneID" id="938430"/>
<dbReference type="KEGG" id="bsu:BSU02240"/>
<dbReference type="PATRIC" id="fig|224308.179.peg.230"/>
<dbReference type="eggNOG" id="COG3591">
    <property type="taxonomic scope" value="Bacteria"/>
</dbReference>
<dbReference type="InParanoid" id="P39790"/>
<dbReference type="OrthoDB" id="191045at2"/>
<dbReference type="PhylomeDB" id="P39790"/>
<dbReference type="BioCyc" id="BSUB:BSU02240-MONOMER"/>
<dbReference type="Proteomes" id="UP000001570">
    <property type="component" value="Chromosome"/>
</dbReference>
<dbReference type="GO" id="GO:0005576">
    <property type="term" value="C:extracellular region"/>
    <property type="evidence" value="ECO:0007669"/>
    <property type="project" value="UniProtKB-SubCell"/>
</dbReference>
<dbReference type="GO" id="GO:0004252">
    <property type="term" value="F:serine-type endopeptidase activity"/>
    <property type="evidence" value="ECO:0007669"/>
    <property type="project" value="InterPro"/>
</dbReference>
<dbReference type="GO" id="GO:0006508">
    <property type="term" value="P:proteolysis"/>
    <property type="evidence" value="ECO:0007669"/>
    <property type="project" value="UniProtKB-KW"/>
</dbReference>
<dbReference type="Gene3D" id="2.40.10.10">
    <property type="entry name" value="Trypsin-like serine proteases"/>
    <property type="match status" value="2"/>
</dbReference>
<dbReference type="InterPro" id="IPR050966">
    <property type="entry name" value="Glutamyl_endopeptidase"/>
</dbReference>
<dbReference type="InterPro" id="IPR009003">
    <property type="entry name" value="Peptidase_S1_PA"/>
</dbReference>
<dbReference type="InterPro" id="IPR043504">
    <property type="entry name" value="Peptidase_S1_PA_chymotrypsin"/>
</dbReference>
<dbReference type="InterPro" id="IPR008256">
    <property type="entry name" value="Peptidase_S1B"/>
</dbReference>
<dbReference type="InterPro" id="IPR001254">
    <property type="entry name" value="Trypsin_dom"/>
</dbReference>
<dbReference type="InterPro" id="IPR018114">
    <property type="entry name" value="TRYPSIN_HIS"/>
</dbReference>
<dbReference type="InterPro" id="IPR028301">
    <property type="entry name" value="V8_his_AS"/>
</dbReference>
<dbReference type="InterPro" id="IPR000126">
    <property type="entry name" value="V8_ser_AS"/>
</dbReference>
<dbReference type="PANTHER" id="PTHR15462">
    <property type="entry name" value="SERINE PROTEASE"/>
    <property type="match status" value="1"/>
</dbReference>
<dbReference type="PANTHER" id="PTHR15462:SF8">
    <property type="entry name" value="SERINE PROTEASE"/>
    <property type="match status" value="1"/>
</dbReference>
<dbReference type="Pfam" id="PF00089">
    <property type="entry name" value="Trypsin"/>
    <property type="match status" value="1"/>
</dbReference>
<dbReference type="PRINTS" id="PR00839">
    <property type="entry name" value="V8PROTEASE"/>
</dbReference>
<dbReference type="SUPFAM" id="SSF50494">
    <property type="entry name" value="Trypsin-like serine proteases"/>
    <property type="match status" value="1"/>
</dbReference>
<dbReference type="PROSITE" id="PS00672">
    <property type="entry name" value="V8_HIS"/>
    <property type="match status" value="1"/>
</dbReference>
<dbReference type="PROSITE" id="PS00673">
    <property type="entry name" value="V8_SER"/>
    <property type="match status" value="1"/>
</dbReference>
<comment type="subunit">
    <text>Monomer.</text>
</comment>
<comment type="subcellular location">
    <subcellularLocation>
        <location>Secreted</location>
    </subcellularLocation>
</comment>
<comment type="similarity">
    <text evidence="5">Belongs to the peptidase S1B family.</text>
</comment>
<comment type="caution">
    <text evidence="5">Called 'metalloprotease', but clearly belongs to the S1B family of serine proteases.</text>
</comment>
<feature type="signal peptide" evidence="2">
    <location>
        <begin position="1"/>
        <end position="34"/>
    </location>
</feature>
<feature type="propeptide" id="PRO_0000026902">
    <location>
        <begin position="35"/>
        <end position="93"/>
    </location>
</feature>
<feature type="chain" id="PRO_0000026903" description="Extracellular metalloprotease">
    <location>
        <begin position="94"/>
        <end position="313"/>
    </location>
</feature>
<feature type="region of interest" description="Disordered" evidence="4">
    <location>
        <begin position="35"/>
        <end position="74"/>
    </location>
</feature>
<feature type="compositionally biased region" description="Polar residues" evidence="4">
    <location>
        <begin position="37"/>
        <end position="60"/>
    </location>
</feature>
<feature type="active site" description="Charge relay system" evidence="3">
    <location>
        <position position="146"/>
    </location>
</feature>
<feature type="active site" description="Charge relay system" evidence="3">
    <location>
        <position position="267"/>
    </location>
</feature>
<feature type="disulfide bond" evidence="1">
    <location>
        <begin position="131"/>
        <end position="147"/>
    </location>
</feature>
<feature type="sequence conflict" description="In Ref. 4; AAA22832." evidence="5" ref="4">
    <original>QVSAPYEG</original>
    <variation>PLESTAQA</variation>
    <location>
        <begin position="61"/>
        <end position="68"/>
    </location>
</feature>
<protein>
    <recommendedName>
        <fullName>Extracellular metalloprotease</fullName>
        <ecNumber>3.4.21.-</ecNumber>
    </recommendedName>
</protein>
<sequence>MKLVPRFRKQWFAYLTVLCLALAAAVSFGVPAKAAENPQTSVSNTGKEADATKNQTSKADQVSAPYEGTGKTSKSLYGGQTELEKNIQTLQPSSIIGTDERTRISSTTSFPYRATVQLSIKYPNTSSTYGCTGFLVNPNTVVTAGHCVYSQDHGWASTITAAPGRNGSSYPYGTYSGTMFYSVKGWTESKDTNYDYGAIKLNGSPGNTVGWYGYRTTNSSSPVGLSSSVTGFPCDKTFGTMWSDTKPIRSAETYKLTYTTDTYGCQSGSPVYRNYSDTGQTAIAIHTNGGSSYNLGTRVTNDVFNNIQYWANQ</sequence>
<gene>
    <name type="primary">mpr</name>
    <name type="ordered locus">BSU02240</name>
</gene>
<keyword id="KW-0903">Direct protein sequencing</keyword>
<keyword id="KW-1015">Disulfide bond</keyword>
<keyword id="KW-0378">Hydrolase</keyword>
<keyword id="KW-0645">Protease</keyword>
<keyword id="KW-1185">Reference proteome</keyword>
<keyword id="KW-0964">Secreted</keyword>
<keyword id="KW-0720">Serine protease</keyword>
<keyword id="KW-0732">Signal</keyword>
<keyword id="KW-0865">Zymogen</keyword>